<reference key="1">
    <citation type="journal article" date="1999" name="J. Biol. Chem.">
        <title>Novel inositol polyphosphate 5-phosphatase localizes at membrane ruffles.</title>
        <authorList>
            <person name="Mochizuki Y."/>
            <person name="Takenawa T."/>
        </authorList>
    </citation>
    <scope>NUCLEOTIDE SEQUENCE [MRNA]</scope>
    <scope>SUBCELLULAR LOCATION</scope>
    <scope>TISSUE SPECIFICITY</scope>
    <scope>CATALYTIC ACTIVITY</scope>
    <source>
        <tissue>Brain</tissue>
    </source>
</reference>
<reference key="2">
    <citation type="submission" date="2007-09" db="UniProtKB">
        <authorList>
            <person name="Lubec G."/>
            <person name="Kang S.U."/>
            <person name="Lubec S."/>
        </authorList>
    </citation>
    <scope>PROTEIN SEQUENCE OF 1-15 AND 903-917</scope>
    <scope>IDENTIFICATION BY MASS SPECTROMETRY</scope>
    <source>
        <strain>Sprague-Dawley</strain>
        <tissue>Brain</tissue>
    </source>
</reference>
<reference key="3">
    <citation type="journal article" date="2012" name="Nat. Commun.">
        <title>Quantitative maps of protein phosphorylation sites across 14 different rat organs and tissues.</title>
        <authorList>
            <person name="Lundby A."/>
            <person name="Secher A."/>
            <person name="Lage K."/>
            <person name="Nordsborg N.B."/>
            <person name="Dmytriyev A."/>
            <person name="Lundby C."/>
            <person name="Olsen J.V."/>
        </authorList>
    </citation>
    <scope>PHOSPHORYLATION [LARGE SCALE ANALYSIS] AT SER-171</scope>
    <scope>IDENTIFICATION BY MASS SPECTROMETRY [LARGE SCALE ANALYSIS]</scope>
</reference>
<name>PI5PA_RAT</name>
<gene>
    <name type="primary">Inpp5j</name>
    <name type="synonym">Pib5pa</name>
    <name type="synonym">Pipp</name>
</gene>
<sequence length="1001" mass="107208">MEGQSRSGSAKSGTRTGLGPLPGTHGALQTGTPSKKVNSSFQLPAKNTGPTPSEPRLALAPVGPRAAVSPPSERPRLALSSPRPILAPLSTAGEQKRPPPHRSSKPAPTSVGQLVVSAAAGPKPPPVASVSILAPKSLGQLVISASAMPRPTPAPLGPILSPTSRDQKQLSPTSVGPKPALATSGLSLALASQEQPPQSPSSPSPVPSPVLSPSQESHLAPATVTSTPASERQLPARQKDTAVRRPIPPADGCLHTPVQAAGLATSPPRAQTSSDPRLSPSFRARPEAPRHSPEDPVLPPPPQTLPLDVSSGLPESGTRSPGLLSPTFRPGIPSNQTVPPPLPKPPRSPSRSPSRSPNRSPCVPPAPEVALPRPVTQGAGPGKCPSPNLQTQESPVATATSPTSSWSAQPTCKSDPGFRITVVTWNVGTAMPPDDVTSLLHLGGGHDSDGADMIAIGLQEVNSMINKRLKDALFTDQWSELFMDALGPFNFVLVSTVRMQGVILLLFAKYYHLPFLRDVQTDCTRTGLGGYWGNKGGVSVRLAAFGHMLCFLNCHLPAHMDKAEQRKDNFQTILSLQQFQGPGAHGILDHDLVFWFGDLNFRIESYDLHFVKFAIDSNQLHQLWEKDQLNMAKNTWPILKGFQEGPLNFAPTFKFDVGTNKYDTSAKKRKPAWTDRILWKVKAPSGGPSPSGRESHRLQVTQHSYRSHMEYTVSDHKPVAARFLLQFAFRDDVPLVRLEVADEWARPEQAVVRYRVETVFARSSWDWIGLYRVGFRHCKDYVAYVWAKHEEVDGNIYQVTFSEESLPKGHGDFILGYYSHHHSILIGVTEPFQISLPTSESASSSTDSSGTSSEGEDDSTLELLAPKSRSPSPGKSKRHRSRSPGLARFPSLALRPSSRERRGGSRSPSPQSRQLPRVAPDRGHSSGSRGSSEEGPSGPPGPWAFPPAVPRSLGLLPALRLETVDPGGGGSWGPDQEAPDPNSLSPSPQGRLGLEDGGLGP</sequence>
<evidence type="ECO:0000250" key="1"/>
<evidence type="ECO:0000250" key="2">
    <source>
        <dbReference type="UniProtKB" id="P59644"/>
    </source>
</evidence>
<evidence type="ECO:0000250" key="3">
    <source>
        <dbReference type="UniProtKB" id="Q15735"/>
    </source>
</evidence>
<evidence type="ECO:0000255" key="4"/>
<evidence type="ECO:0000256" key="5">
    <source>
        <dbReference type="SAM" id="MobiDB-lite"/>
    </source>
</evidence>
<evidence type="ECO:0000269" key="6">
    <source>
    </source>
</evidence>
<evidence type="ECO:0000305" key="7"/>
<evidence type="ECO:0007744" key="8">
    <source>
    </source>
</evidence>
<dbReference type="EC" id="3.1.3.36" evidence="6"/>
<dbReference type="EC" id="3.1.3.56" evidence="6"/>
<dbReference type="EMBL" id="AB032551">
    <property type="protein sequence ID" value="BAA90553.1"/>
    <property type="molecule type" value="mRNA"/>
</dbReference>
<dbReference type="RefSeq" id="NP_598246.1">
    <property type="nucleotide sequence ID" value="NM_133562.2"/>
</dbReference>
<dbReference type="SMR" id="Q9JMC1"/>
<dbReference type="FunCoup" id="Q9JMC1">
    <property type="interactions" value="439"/>
</dbReference>
<dbReference type="STRING" id="10116.ENSRNOP00000026293"/>
<dbReference type="GlyGen" id="Q9JMC1">
    <property type="glycosylation" value="2 sites"/>
</dbReference>
<dbReference type="iPTMnet" id="Q9JMC1"/>
<dbReference type="PhosphoSitePlus" id="Q9JMC1"/>
<dbReference type="PaxDb" id="10116-ENSRNOP00000026293"/>
<dbReference type="GeneID" id="171088"/>
<dbReference type="KEGG" id="rno:171088"/>
<dbReference type="UCSC" id="RGD:620541">
    <property type="organism name" value="rat"/>
</dbReference>
<dbReference type="AGR" id="RGD:620541"/>
<dbReference type="CTD" id="27124"/>
<dbReference type="RGD" id="620541">
    <property type="gene designation" value="Inpp5j"/>
</dbReference>
<dbReference type="VEuPathDB" id="HostDB:ENSRNOG00000019361"/>
<dbReference type="eggNOG" id="KOG0565">
    <property type="taxonomic scope" value="Eukaryota"/>
</dbReference>
<dbReference type="HOGENOM" id="CLU_011711_3_0_1"/>
<dbReference type="InParanoid" id="Q9JMC1"/>
<dbReference type="OrthoDB" id="62798at2759"/>
<dbReference type="PhylomeDB" id="Q9JMC1"/>
<dbReference type="TreeFam" id="TF317034"/>
<dbReference type="Reactome" id="R-RNO-1660499">
    <property type="pathway name" value="Synthesis of PIPs at the plasma membrane"/>
</dbReference>
<dbReference type="Reactome" id="R-RNO-1855183">
    <property type="pathway name" value="Synthesis of IP2, IP, and Ins in the cytosol"/>
</dbReference>
<dbReference type="Reactome" id="R-RNO-1855204">
    <property type="pathway name" value="Synthesis of IP3 and IP4 in the cytosol"/>
</dbReference>
<dbReference type="PRO" id="PR:Q9JMC1"/>
<dbReference type="Proteomes" id="UP000002494">
    <property type="component" value="Chromosome 14"/>
</dbReference>
<dbReference type="Bgee" id="ENSRNOG00000019361">
    <property type="expression patterns" value="Expressed in cerebellum and 15 other cell types or tissues"/>
</dbReference>
<dbReference type="GO" id="GO:0005737">
    <property type="term" value="C:cytoplasm"/>
    <property type="evidence" value="ECO:0000266"/>
    <property type="project" value="RGD"/>
</dbReference>
<dbReference type="GO" id="GO:0043198">
    <property type="term" value="C:dendritic shaft"/>
    <property type="evidence" value="ECO:0000266"/>
    <property type="project" value="RGD"/>
</dbReference>
<dbReference type="GO" id="GO:0030426">
    <property type="term" value="C:growth cone"/>
    <property type="evidence" value="ECO:0000314"/>
    <property type="project" value="RGD"/>
</dbReference>
<dbReference type="GO" id="GO:0043005">
    <property type="term" value="C:neuron projection"/>
    <property type="evidence" value="ECO:0000318"/>
    <property type="project" value="GO_Central"/>
</dbReference>
<dbReference type="GO" id="GO:0005886">
    <property type="term" value="C:plasma membrane"/>
    <property type="evidence" value="ECO:0000266"/>
    <property type="project" value="RGD"/>
</dbReference>
<dbReference type="GO" id="GO:0001726">
    <property type="term" value="C:ruffle"/>
    <property type="evidence" value="ECO:0000314"/>
    <property type="project" value="RGD"/>
</dbReference>
<dbReference type="GO" id="GO:0032587">
    <property type="term" value="C:ruffle membrane"/>
    <property type="evidence" value="ECO:0000314"/>
    <property type="project" value="MGI"/>
</dbReference>
<dbReference type="GO" id="GO:0046030">
    <property type="term" value="F:inositol trisphosphate phosphatase activity"/>
    <property type="evidence" value="ECO:0000318"/>
    <property type="project" value="GO_Central"/>
</dbReference>
<dbReference type="GO" id="GO:0052659">
    <property type="term" value="F:inositol-1,3,4,5-tetrakisphosphate 5-phosphatase activity"/>
    <property type="evidence" value="ECO:0007669"/>
    <property type="project" value="RHEA"/>
</dbReference>
<dbReference type="GO" id="GO:0052658">
    <property type="term" value="F:inositol-1,4,5-trisphosphate 5-phosphatase activity"/>
    <property type="evidence" value="ECO:0007669"/>
    <property type="project" value="RHEA"/>
</dbReference>
<dbReference type="GO" id="GO:0004445">
    <property type="term" value="F:inositol-polyphosphate 5-phosphatase activity"/>
    <property type="evidence" value="ECO:0000314"/>
    <property type="project" value="MGI"/>
</dbReference>
<dbReference type="GO" id="GO:0034485">
    <property type="term" value="F:phosphatidylinositol-3,4,5-trisphosphate 5-phosphatase activity"/>
    <property type="evidence" value="ECO:0000266"/>
    <property type="project" value="RGD"/>
</dbReference>
<dbReference type="GO" id="GO:0004439">
    <property type="term" value="F:phosphatidylinositol-4,5-bisphosphate 5-phosphatase activity"/>
    <property type="evidence" value="ECO:0000318"/>
    <property type="project" value="GO_Central"/>
</dbReference>
<dbReference type="GO" id="GO:0017124">
    <property type="term" value="F:SH3 domain binding"/>
    <property type="evidence" value="ECO:0007669"/>
    <property type="project" value="UniProtKB-KW"/>
</dbReference>
<dbReference type="GO" id="GO:0031115">
    <property type="term" value="P:negative regulation of microtubule polymerization"/>
    <property type="evidence" value="ECO:0000315"/>
    <property type="project" value="RGD"/>
</dbReference>
<dbReference type="GO" id="GO:0010977">
    <property type="term" value="P:negative regulation of neuron projection development"/>
    <property type="evidence" value="ECO:0000315"/>
    <property type="project" value="RGD"/>
</dbReference>
<dbReference type="GO" id="GO:0046856">
    <property type="term" value="P:phosphatidylinositol dephosphorylation"/>
    <property type="evidence" value="ECO:0007669"/>
    <property type="project" value="InterPro"/>
</dbReference>
<dbReference type="CDD" id="cd09094">
    <property type="entry name" value="INPP5c_INPP5J-like"/>
    <property type="match status" value="1"/>
</dbReference>
<dbReference type="FunFam" id="2.60.40.2840:FF:000003">
    <property type="entry name" value="Phosphatidylinositol 4,5-bisphosphate 5-phosphatase A"/>
    <property type="match status" value="1"/>
</dbReference>
<dbReference type="FunFam" id="3.60.10.10:FF:000013">
    <property type="entry name" value="Phosphatidylinositol 4,5-bisphosphate 5-phosphatase A"/>
    <property type="match status" value="1"/>
</dbReference>
<dbReference type="Gene3D" id="2.60.40.2840">
    <property type="match status" value="1"/>
</dbReference>
<dbReference type="Gene3D" id="3.60.10.10">
    <property type="entry name" value="Endonuclease/exonuclease/phosphatase"/>
    <property type="match status" value="1"/>
</dbReference>
<dbReference type="InterPro" id="IPR036691">
    <property type="entry name" value="Endo/exonu/phosph_ase_sf"/>
</dbReference>
<dbReference type="InterPro" id="IPR046985">
    <property type="entry name" value="IP5"/>
</dbReference>
<dbReference type="InterPro" id="IPR000300">
    <property type="entry name" value="IPPc"/>
</dbReference>
<dbReference type="InterPro" id="IPR041611">
    <property type="entry name" value="SKICH"/>
</dbReference>
<dbReference type="PANTHER" id="PTHR11200">
    <property type="entry name" value="INOSITOL 5-PHOSPHATASE"/>
    <property type="match status" value="1"/>
</dbReference>
<dbReference type="PANTHER" id="PTHR11200:SF127">
    <property type="entry name" value="PHOSPHATIDYLINOSITOL 4,5-BISPHOSPHATE 5-PHOSPHATASE A"/>
    <property type="match status" value="1"/>
</dbReference>
<dbReference type="Pfam" id="PF22669">
    <property type="entry name" value="Exo_endo_phos2"/>
    <property type="match status" value="1"/>
</dbReference>
<dbReference type="Pfam" id="PF17751">
    <property type="entry name" value="SKICH"/>
    <property type="match status" value="1"/>
</dbReference>
<dbReference type="SMART" id="SM00128">
    <property type="entry name" value="IPPc"/>
    <property type="match status" value="1"/>
</dbReference>
<dbReference type="SUPFAM" id="SSF56219">
    <property type="entry name" value="DNase I-like"/>
    <property type="match status" value="1"/>
</dbReference>
<keyword id="KW-0963">Cytoplasm</keyword>
<keyword id="KW-0903">Direct protein sequencing</keyword>
<keyword id="KW-0378">Hydrolase</keyword>
<keyword id="KW-0488">Methylation</keyword>
<keyword id="KW-0597">Phosphoprotein</keyword>
<keyword id="KW-1185">Reference proteome</keyword>
<keyword id="KW-0677">Repeat</keyword>
<keyword id="KW-0729">SH3-binding</keyword>
<protein>
    <recommendedName>
        <fullName>Phosphatidylinositol 4,5-bisphosphate 5-phosphatase A</fullName>
        <ecNumber evidence="6">3.1.3.36</ecNumber>
    </recommendedName>
    <alternativeName>
        <fullName>Inositol polyphosphate 5-phosphatase J</fullName>
    </alternativeName>
    <alternativeName>
        <fullName>Phosphatidylinositol 1,3,4,5-tetrakisphosphate 5-phosphatase</fullName>
        <ecNumber evidence="6">3.1.3.56</ecNumber>
    </alternativeName>
    <alternativeName>
        <fullName>Phosphatidylinositol 1,4,5-trisphosphate 5-phosphatase</fullName>
        <ecNumber evidence="6">3.1.3.56</ecNumber>
    </alternativeName>
    <alternativeName>
        <fullName>Proline-rich inositol polyphosphate 5-phosphatase</fullName>
    </alternativeName>
</protein>
<accession>Q9JMC1</accession>
<comment type="function">
    <text evidence="6">Inositol 5-phosphatase, which converts inositol 1,4,5-trisphosphate to inositol 1,4-bisphosphate. Also converts phosphatidylinositol 4,5-bisphosphate to phosphatidylinositol 4-phosphate and inositol 1,3,4,5-tetrakisphosphate to inositol 1,3,4-trisphosphate in vitro (PubMed:10593988). May be involved in modulation of the function of inositol and phosphatidylinositol polyphosphate-binding proteins that are present at membranes ruffles (PubMed:10593988).</text>
</comment>
<comment type="catalytic activity">
    <reaction evidence="6">
        <text>1D-myo-inositol 1,4,5-trisphosphate + H2O = 1D-myo-inositol 1,4-bisphosphate + phosphate</text>
        <dbReference type="Rhea" id="RHEA:19797"/>
        <dbReference type="ChEBI" id="CHEBI:15377"/>
        <dbReference type="ChEBI" id="CHEBI:43474"/>
        <dbReference type="ChEBI" id="CHEBI:58282"/>
        <dbReference type="ChEBI" id="CHEBI:203600"/>
        <dbReference type="EC" id="3.1.3.56"/>
    </reaction>
    <physiologicalReaction direction="left-to-right" evidence="6">
        <dbReference type="Rhea" id="RHEA:19798"/>
    </physiologicalReaction>
</comment>
<comment type="catalytic activity">
    <reaction evidence="6">
        <text>1D-myo-inositol 1,3,4,5-tetrakisphosphate + H2O = 1D-myo-inositol 1,3,4-trisphosphate + phosphate</text>
        <dbReference type="Rhea" id="RHEA:11392"/>
        <dbReference type="ChEBI" id="CHEBI:15377"/>
        <dbReference type="ChEBI" id="CHEBI:43474"/>
        <dbReference type="ChEBI" id="CHEBI:57895"/>
        <dbReference type="ChEBI" id="CHEBI:58414"/>
        <dbReference type="EC" id="3.1.3.56"/>
    </reaction>
    <physiologicalReaction direction="left-to-right" evidence="6">
        <dbReference type="Rhea" id="RHEA:11393"/>
    </physiologicalReaction>
</comment>
<comment type="catalytic activity">
    <reaction evidence="6">
        <text>a 1,2-diacyl-sn-glycero-3-phospho-(1D-myo-inositol-4,5-bisphosphate) + H2O = a 1,2-diacyl-sn-glycero-3-phospho-(1D-myo-inositol 4-phosphate) + phosphate</text>
        <dbReference type="Rhea" id="RHEA:22764"/>
        <dbReference type="ChEBI" id="CHEBI:15377"/>
        <dbReference type="ChEBI" id="CHEBI:43474"/>
        <dbReference type="ChEBI" id="CHEBI:58178"/>
        <dbReference type="ChEBI" id="CHEBI:58456"/>
        <dbReference type="EC" id="3.1.3.36"/>
    </reaction>
    <physiologicalReaction direction="left-to-right" evidence="6">
        <dbReference type="Rhea" id="RHEA:22765"/>
    </physiologicalReaction>
</comment>
<comment type="subcellular location">
    <subcellularLocation>
        <location evidence="6">Cytoplasm</location>
    </subcellularLocation>
    <text>Predominantly localized to membrane ruffles.</text>
</comment>
<comment type="tissue specificity">
    <text evidence="6">Expressed in heart, brain, kidney, stomach, small intestine and lung. Not expressed in spleen, thymus, skeletal muscle, testis and skin.</text>
</comment>
<comment type="domain">
    <text>The 5 Arg-Ser-Xaa-Ser-Xaa-Xaa (RSXSXX) motifs may constitute binding sites for the 14-3-3 protein.</text>
</comment>
<comment type="PTM">
    <text>Phosphorylated on Ser/Thr residues.</text>
</comment>
<comment type="similarity">
    <text evidence="7">Belongs to the inositol 1,4,5-trisphosphate 5-phosphatase type II family.</text>
</comment>
<proteinExistence type="evidence at protein level"/>
<organism>
    <name type="scientific">Rattus norvegicus</name>
    <name type="common">Rat</name>
    <dbReference type="NCBI Taxonomy" id="10116"/>
    <lineage>
        <taxon>Eukaryota</taxon>
        <taxon>Metazoa</taxon>
        <taxon>Chordata</taxon>
        <taxon>Craniata</taxon>
        <taxon>Vertebrata</taxon>
        <taxon>Euteleostomi</taxon>
        <taxon>Mammalia</taxon>
        <taxon>Eutheria</taxon>
        <taxon>Euarchontoglires</taxon>
        <taxon>Glires</taxon>
        <taxon>Rodentia</taxon>
        <taxon>Myomorpha</taxon>
        <taxon>Muroidea</taxon>
        <taxon>Muridae</taxon>
        <taxon>Murinae</taxon>
        <taxon>Rattus</taxon>
    </lineage>
</organism>
<feature type="chain" id="PRO_0000209740" description="Phosphatidylinositol 4,5-bisphosphate 5-phosphatase A">
    <location>
        <begin position="1"/>
        <end position="1001"/>
    </location>
</feature>
<feature type="region of interest" description="Disordered" evidence="5">
    <location>
        <begin position="1"/>
        <end position="130"/>
    </location>
</feature>
<feature type="region of interest" description="Disordered" evidence="5">
    <location>
        <begin position="144"/>
        <end position="412"/>
    </location>
</feature>
<feature type="region of interest" description="Catalytic" evidence="4">
    <location>
        <begin position="420"/>
        <end position="723"/>
    </location>
</feature>
<feature type="region of interest" description="Required for ruffle localization" evidence="1">
    <location>
        <begin position="724"/>
        <end position="835"/>
    </location>
</feature>
<feature type="region of interest" description="Disordered" evidence="5">
    <location>
        <begin position="837"/>
        <end position="1001"/>
    </location>
</feature>
<feature type="short sequence motif" description="RSXSXX motif 1">
    <location>
        <begin position="6"/>
        <end position="11"/>
    </location>
</feature>
<feature type="short sequence motif" description="SH3-binding" evidence="4">
    <location>
        <begin position="346"/>
        <end position="351"/>
    </location>
</feature>
<feature type="short sequence motif" description="RSXSXX motif 2">
    <location>
        <begin position="351"/>
        <end position="356"/>
    </location>
</feature>
<feature type="short sequence motif" description="RSXSXX motif 3">
    <location>
        <begin position="869"/>
        <end position="874"/>
    </location>
</feature>
<feature type="short sequence motif" description="RSXSXX motif 4">
    <location>
        <begin position="880"/>
        <end position="885"/>
    </location>
</feature>
<feature type="short sequence motif" description="RSXSXX motif 5">
    <location>
        <begin position="906"/>
        <end position="911"/>
    </location>
</feature>
<feature type="compositionally biased region" description="Polar residues" evidence="5">
    <location>
        <begin position="1"/>
        <end position="12"/>
    </location>
</feature>
<feature type="compositionally biased region" description="Low complexity" evidence="5">
    <location>
        <begin position="13"/>
        <end position="28"/>
    </location>
</feature>
<feature type="compositionally biased region" description="Polar residues" evidence="5">
    <location>
        <begin position="29"/>
        <end position="42"/>
    </location>
</feature>
<feature type="compositionally biased region" description="Polar residues" evidence="5">
    <location>
        <begin position="161"/>
        <end position="174"/>
    </location>
</feature>
<feature type="compositionally biased region" description="Low complexity" evidence="5">
    <location>
        <begin position="180"/>
        <end position="196"/>
    </location>
</feature>
<feature type="compositionally biased region" description="Pro residues" evidence="5">
    <location>
        <begin position="197"/>
        <end position="210"/>
    </location>
</feature>
<feature type="compositionally biased region" description="Basic and acidic residues" evidence="5">
    <location>
        <begin position="284"/>
        <end position="294"/>
    </location>
</feature>
<feature type="compositionally biased region" description="Pro residues" evidence="5">
    <location>
        <begin position="338"/>
        <end position="348"/>
    </location>
</feature>
<feature type="compositionally biased region" description="Low complexity" evidence="5">
    <location>
        <begin position="349"/>
        <end position="361"/>
    </location>
</feature>
<feature type="compositionally biased region" description="Low complexity" evidence="5">
    <location>
        <begin position="394"/>
        <end position="411"/>
    </location>
</feature>
<feature type="compositionally biased region" description="Low complexity" evidence="5">
    <location>
        <begin position="838"/>
        <end position="853"/>
    </location>
</feature>
<feature type="compositionally biased region" description="Low complexity" evidence="5">
    <location>
        <begin position="905"/>
        <end position="917"/>
    </location>
</feature>
<feature type="compositionally biased region" description="Low complexity" evidence="5">
    <location>
        <begin position="925"/>
        <end position="936"/>
    </location>
</feature>
<feature type="compositionally biased region" description="Pro residues" evidence="5">
    <location>
        <begin position="937"/>
        <end position="949"/>
    </location>
</feature>
<feature type="modified residue" description="Asymmetric dimethylarginine; alternate" evidence="2">
    <location>
        <position position="56"/>
    </location>
</feature>
<feature type="modified residue" description="Omega-N-methylarginine; alternate" evidence="2">
    <location>
        <position position="56"/>
    </location>
</feature>
<feature type="modified residue" description="Omega-N-methylarginine" evidence="2">
    <location>
        <position position="65"/>
    </location>
</feature>
<feature type="modified residue" description="Asymmetric dimethylarginine" evidence="2">
    <location>
        <position position="76"/>
    </location>
</feature>
<feature type="modified residue" description="Asymmetric dimethylarginine; alternate" evidence="2">
    <location>
        <position position="83"/>
    </location>
</feature>
<feature type="modified residue" description="Omega-N-methylarginine; alternate" evidence="2">
    <location>
        <position position="83"/>
    </location>
</feature>
<feature type="modified residue" description="Phosphoserine" evidence="8">
    <location>
        <position position="171"/>
    </location>
</feature>
<feature type="modified residue" description="Phosphoserine" evidence="2">
    <location>
        <position position="292"/>
    </location>
</feature>
<feature type="modified residue" description="Phosphoserine" evidence="2">
    <location>
        <position position="325"/>
    </location>
</feature>
<feature type="modified residue" description="Phosphoserine" evidence="3">
    <location>
        <position position="898"/>
    </location>
</feature>
<feature type="modified residue" description="Phosphoserine" evidence="3">
    <location>
        <position position="985"/>
    </location>
</feature>